<protein>
    <recommendedName>
        <fullName evidence="1">Small ribosomal subunit protein uS13</fullName>
    </recommendedName>
    <alternativeName>
        <fullName evidence="3">30S ribosomal protein S13</fullName>
    </alternativeName>
</protein>
<accession>P73299</accession>
<keyword id="KW-1185">Reference proteome</keyword>
<keyword id="KW-0687">Ribonucleoprotein</keyword>
<keyword id="KW-0689">Ribosomal protein</keyword>
<keyword id="KW-0694">RNA-binding</keyword>
<keyword id="KW-0699">rRNA-binding</keyword>
<keyword id="KW-0820">tRNA-binding</keyword>
<name>RS13_SYNY3</name>
<organism>
    <name type="scientific">Synechocystis sp. (strain ATCC 27184 / PCC 6803 / Kazusa)</name>
    <dbReference type="NCBI Taxonomy" id="1111708"/>
    <lineage>
        <taxon>Bacteria</taxon>
        <taxon>Bacillati</taxon>
        <taxon>Cyanobacteriota</taxon>
        <taxon>Cyanophyceae</taxon>
        <taxon>Synechococcales</taxon>
        <taxon>Merismopediaceae</taxon>
        <taxon>Synechocystis</taxon>
    </lineage>
</organism>
<feature type="chain" id="PRO_0000132157" description="Small ribosomal subunit protein uS13">
    <location>
        <begin position="1"/>
        <end position="127"/>
    </location>
</feature>
<feature type="region of interest" description="Disordered" evidence="2">
    <location>
        <begin position="90"/>
        <end position="127"/>
    </location>
</feature>
<feature type="compositionally biased region" description="Basic residues" evidence="2">
    <location>
        <begin position="101"/>
        <end position="127"/>
    </location>
</feature>
<reference key="1">
    <citation type="journal article" date="1996" name="DNA Res.">
        <title>Sequence analysis of the genome of the unicellular cyanobacterium Synechocystis sp. strain PCC6803. II. Sequence determination of the entire genome and assignment of potential protein-coding regions.</title>
        <authorList>
            <person name="Kaneko T."/>
            <person name="Sato S."/>
            <person name="Kotani H."/>
            <person name="Tanaka A."/>
            <person name="Asamizu E."/>
            <person name="Nakamura Y."/>
            <person name="Miyajima N."/>
            <person name="Hirosawa M."/>
            <person name="Sugiura M."/>
            <person name="Sasamoto S."/>
            <person name="Kimura T."/>
            <person name="Hosouchi T."/>
            <person name="Matsuno A."/>
            <person name="Muraki A."/>
            <person name="Nakazaki N."/>
            <person name="Naruo K."/>
            <person name="Okumura S."/>
            <person name="Shimpo S."/>
            <person name="Takeuchi C."/>
            <person name="Wada T."/>
            <person name="Watanabe A."/>
            <person name="Yamada M."/>
            <person name="Yasuda M."/>
            <person name="Tabata S."/>
        </authorList>
    </citation>
    <scope>NUCLEOTIDE SEQUENCE [LARGE SCALE GENOMIC DNA]</scope>
    <source>
        <strain>ATCC 27184 / PCC 6803 / Kazusa</strain>
    </source>
</reference>
<dbReference type="EMBL" id="BA000022">
    <property type="protein sequence ID" value="BAA17327.1"/>
    <property type="molecule type" value="Genomic_DNA"/>
</dbReference>
<dbReference type="PIR" id="S77480">
    <property type="entry name" value="S77480"/>
</dbReference>
<dbReference type="SMR" id="P73299"/>
<dbReference type="FunCoup" id="P73299">
    <property type="interactions" value="510"/>
</dbReference>
<dbReference type="STRING" id="1148.gene:10498190"/>
<dbReference type="PaxDb" id="1148-1652405"/>
<dbReference type="EnsemblBacteria" id="BAA17327">
    <property type="protein sequence ID" value="BAA17327"/>
    <property type="gene ID" value="BAA17327"/>
</dbReference>
<dbReference type="KEGG" id="syn:sll1816"/>
<dbReference type="eggNOG" id="COG0099">
    <property type="taxonomic scope" value="Bacteria"/>
</dbReference>
<dbReference type="InParanoid" id="P73299"/>
<dbReference type="PhylomeDB" id="P73299"/>
<dbReference type="Proteomes" id="UP000001425">
    <property type="component" value="Chromosome"/>
</dbReference>
<dbReference type="GO" id="GO:0005829">
    <property type="term" value="C:cytosol"/>
    <property type="evidence" value="ECO:0000318"/>
    <property type="project" value="GO_Central"/>
</dbReference>
<dbReference type="GO" id="GO:0015935">
    <property type="term" value="C:small ribosomal subunit"/>
    <property type="evidence" value="ECO:0000318"/>
    <property type="project" value="GO_Central"/>
</dbReference>
<dbReference type="GO" id="GO:0019843">
    <property type="term" value="F:rRNA binding"/>
    <property type="evidence" value="ECO:0007669"/>
    <property type="project" value="UniProtKB-UniRule"/>
</dbReference>
<dbReference type="GO" id="GO:0003735">
    <property type="term" value="F:structural constituent of ribosome"/>
    <property type="evidence" value="ECO:0007669"/>
    <property type="project" value="InterPro"/>
</dbReference>
<dbReference type="GO" id="GO:0000049">
    <property type="term" value="F:tRNA binding"/>
    <property type="evidence" value="ECO:0007669"/>
    <property type="project" value="UniProtKB-UniRule"/>
</dbReference>
<dbReference type="GO" id="GO:0006412">
    <property type="term" value="P:translation"/>
    <property type="evidence" value="ECO:0007669"/>
    <property type="project" value="UniProtKB-UniRule"/>
</dbReference>
<dbReference type="FunFam" id="1.10.8.50:FF:000001">
    <property type="entry name" value="30S ribosomal protein S13"/>
    <property type="match status" value="1"/>
</dbReference>
<dbReference type="FunFam" id="4.10.910.10:FF:000001">
    <property type="entry name" value="30S ribosomal protein S13"/>
    <property type="match status" value="1"/>
</dbReference>
<dbReference type="Gene3D" id="1.10.8.50">
    <property type="match status" value="1"/>
</dbReference>
<dbReference type="Gene3D" id="4.10.910.10">
    <property type="entry name" value="30s ribosomal protein s13, domain 2"/>
    <property type="match status" value="1"/>
</dbReference>
<dbReference type="HAMAP" id="MF_01315">
    <property type="entry name" value="Ribosomal_uS13"/>
    <property type="match status" value="1"/>
</dbReference>
<dbReference type="InterPro" id="IPR027437">
    <property type="entry name" value="Rbsml_uS13_C"/>
</dbReference>
<dbReference type="InterPro" id="IPR001892">
    <property type="entry name" value="Ribosomal_uS13"/>
</dbReference>
<dbReference type="InterPro" id="IPR010979">
    <property type="entry name" value="Ribosomal_uS13-like_H2TH"/>
</dbReference>
<dbReference type="InterPro" id="IPR019980">
    <property type="entry name" value="Ribosomal_uS13_bac-type"/>
</dbReference>
<dbReference type="InterPro" id="IPR018269">
    <property type="entry name" value="Ribosomal_uS13_CS"/>
</dbReference>
<dbReference type="NCBIfam" id="TIGR03631">
    <property type="entry name" value="uS13_bact"/>
    <property type="match status" value="1"/>
</dbReference>
<dbReference type="PANTHER" id="PTHR10871">
    <property type="entry name" value="30S RIBOSOMAL PROTEIN S13/40S RIBOSOMAL PROTEIN S18"/>
    <property type="match status" value="1"/>
</dbReference>
<dbReference type="PANTHER" id="PTHR10871:SF1">
    <property type="entry name" value="SMALL RIBOSOMAL SUBUNIT PROTEIN US13M"/>
    <property type="match status" value="1"/>
</dbReference>
<dbReference type="Pfam" id="PF00416">
    <property type="entry name" value="Ribosomal_S13"/>
    <property type="match status" value="1"/>
</dbReference>
<dbReference type="PIRSF" id="PIRSF002134">
    <property type="entry name" value="Ribosomal_S13"/>
    <property type="match status" value="1"/>
</dbReference>
<dbReference type="SUPFAM" id="SSF46946">
    <property type="entry name" value="S13-like H2TH domain"/>
    <property type="match status" value="1"/>
</dbReference>
<dbReference type="PROSITE" id="PS00646">
    <property type="entry name" value="RIBOSOMAL_S13_1"/>
    <property type="match status" value="1"/>
</dbReference>
<dbReference type="PROSITE" id="PS50159">
    <property type="entry name" value="RIBOSOMAL_S13_2"/>
    <property type="match status" value="1"/>
</dbReference>
<comment type="function">
    <text evidence="1">Located at the top of the head of the 30S subunit, it contacts several helices of the 16S rRNA. In the 70S ribosome it contacts the 23S rRNA (bridge B1a) and protein L5 of the 50S subunit (bridge B1b), connecting the 2 subunits; these bridges are implicated in subunit movement. Contacts the tRNAs in the A and P-sites.</text>
</comment>
<comment type="subunit">
    <text evidence="1">Part of the 30S ribosomal subunit. Forms a loose heterodimer with protein S19. Forms two bridges to the 50S subunit in the 70S ribosome.</text>
</comment>
<comment type="similarity">
    <text evidence="1">Belongs to the universal ribosomal protein uS13 family.</text>
</comment>
<gene>
    <name evidence="1" type="primary">rpsM</name>
    <name evidence="1" type="synonym">rps13</name>
    <name type="ordered locus">sll1816</name>
</gene>
<sequence length="127" mass="14572">MARIAGVDLPRDKRVEIALTYLYGIGLSRSHEILDATGVSPDVRVKDLSDEDALKLRTYIDENYEIEGDLRRWEAMNIKRLGDIGTYRGRRHRQGLPVRGQRTRTNARTRRGRRLTVAGKKKTPAKK</sequence>
<evidence type="ECO:0000255" key="1">
    <source>
        <dbReference type="HAMAP-Rule" id="MF_01315"/>
    </source>
</evidence>
<evidence type="ECO:0000256" key="2">
    <source>
        <dbReference type="SAM" id="MobiDB-lite"/>
    </source>
</evidence>
<evidence type="ECO:0000305" key="3"/>
<proteinExistence type="inferred from homology"/>